<protein>
    <recommendedName>
        <fullName>Excitatory amino acid transporter 4</fullName>
    </recommendedName>
    <alternativeName>
        <fullName>High-affinity neuronal glutamate transporter</fullName>
    </alternativeName>
    <alternativeName>
        <fullName>Sodium-dependent glutamate/aspartate transporter</fullName>
    </alternativeName>
    <alternativeName>
        <fullName>Solute carrier family 1 member 6</fullName>
    </alternativeName>
</protein>
<gene>
    <name type="primary">Slc1a6</name>
    <name type="synonym">Eaat4</name>
</gene>
<comment type="function">
    <text evidence="5 6 7">Sodium-dependent, high-affinity amino acid transporter that mediates the uptake of L-glutamate and also L-aspartate and D-aspartate (PubMed:14506254, PubMed:26690923). Functions as a symporter that transports one amino acid molecule together with two or three Na(+) ions and one proton, in parallel with the counter-transport of one K(+) ion (PubMed:14506254). Mediates Cl(-) flux that is not coupled to amino acid transport; this avoids the accumulation of negative charges due to aspartate and Na(+) symport (PubMed:14506254). Plays a redundant role in the rapid removal of released glutamate from the synaptic cleft, which is essential for terminating the postsynaptic action of glutamate (Probable).</text>
</comment>
<comment type="catalytic activity">
    <reaction evidence="3">
        <text>K(+)(in) + L-glutamate(out) + 3 Na(+)(out) + H(+)(out) = K(+)(out) + L-glutamate(in) + 3 Na(+)(in) + H(+)(in)</text>
        <dbReference type="Rhea" id="RHEA:70699"/>
        <dbReference type="ChEBI" id="CHEBI:15378"/>
        <dbReference type="ChEBI" id="CHEBI:29101"/>
        <dbReference type="ChEBI" id="CHEBI:29103"/>
        <dbReference type="ChEBI" id="CHEBI:29985"/>
    </reaction>
</comment>
<comment type="catalytic activity">
    <reaction evidence="3">
        <text>K(+)(in) + L-aspartate(out) + 3 Na(+)(out) + H(+)(out) = K(+)(out) + L-aspartate(in) + 3 Na(+)(in) + H(+)(in)</text>
        <dbReference type="Rhea" id="RHEA:70851"/>
        <dbReference type="ChEBI" id="CHEBI:15378"/>
        <dbReference type="ChEBI" id="CHEBI:29101"/>
        <dbReference type="ChEBI" id="CHEBI:29103"/>
        <dbReference type="ChEBI" id="CHEBI:29991"/>
    </reaction>
</comment>
<comment type="catalytic activity">
    <reaction evidence="3">
        <text>D-aspartate(out) + K(+)(in) + 3 Na(+)(out) + H(+)(out) = D-aspartate(in) + K(+)(out) + 3 Na(+)(in) + H(+)(in)</text>
        <dbReference type="Rhea" id="RHEA:71379"/>
        <dbReference type="ChEBI" id="CHEBI:15378"/>
        <dbReference type="ChEBI" id="CHEBI:29101"/>
        <dbReference type="ChEBI" id="CHEBI:29103"/>
        <dbReference type="ChEBI" id="CHEBI:29990"/>
    </reaction>
</comment>
<comment type="biophysicochemical properties">
    <kinetics>
        <KM evidence="6">328 uM for L-glutamate</KM>
    </kinetics>
</comment>
<comment type="subunit">
    <text evidence="7">Homotrimer.</text>
</comment>
<comment type="subcellular location">
    <subcellularLocation>
        <location evidence="6">Cell membrane</location>
        <topology evidence="7">Multi-pass membrane protein</topology>
    </subcellularLocation>
</comment>
<comment type="domain">
    <text evidence="2">Contains eight transmembrane regions plus two helical hairpins that dip into the membrane. These helical hairpin structures play an important role in the transport process. The first enters the membrane from the cytoplasmic side, the second one from the extracellular side. During the transport cycle, the regions involved in amino acid transport, and especially the helical hairpins, move vertically by about 15-18 Angstroms, alternating between exposure to the aqueous phase and reinsertion in the lipid bilayer. In contrast, the regions involved in trimerization do not move.</text>
</comment>
<comment type="similarity">
    <text evidence="7">Belongs to the dicarboxylate/amino acid:cation symporter (DAACS) (TC 2.A.23) family. SLC1A6 subfamily.</text>
</comment>
<feature type="chain" id="PRO_0000202072" description="Excitatory amino acid transporter 4">
    <location>
        <begin position="1"/>
        <end position="561"/>
    </location>
</feature>
<feature type="topological domain" description="Cytoplasmic" evidence="4">
    <location>
        <begin position="1"/>
        <end position="52"/>
    </location>
</feature>
<feature type="transmembrane region" description="Helical" evidence="4">
    <location>
        <begin position="53"/>
        <end position="73"/>
    </location>
</feature>
<feature type="transmembrane region" description="Helical" evidence="4">
    <location>
        <begin position="96"/>
        <end position="116"/>
    </location>
</feature>
<feature type="transmembrane region" description="Helical" evidence="4">
    <location>
        <begin position="130"/>
        <end position="150"/>
    </location>
</feature>
<feature type="transmembrane region" description="Helical; Name=4" evidence="2">
    <location>
        <begin position="259"/>
        <end position="282"/>
    </location>
</feature>
<feature type="transmembrane region" description="Helical; Name=5" evidence="2">
    <location>
        <begin position="292"/>
        <end position="319"/>
    </location>
</feature>
<feature type="transmembrane region" description="Helical; Name=6" evidence="2">
    <location>
        <begin position="341"/>
        <end position="362"/>
    </location>
</feature>
<feature type="intramembrane region" description="Discontinuously helical" evidence="2">
    <location>
        <begin position="368"/>
        <end position="398"/>
    </location>
</feature>
<feature type="transmembrane region" description="Helical; Name=7" evidence="2">
    <location>
        <begin position="408"/>
        <end position="434"/>
    </location>
</feature>
<feature type="intramembrane region" description="Discontinuously helical" evidence="2">
    <location>
        <begin position="448"/>
        <end position="481"/>
    </location>
</feature>
<feature type="transmembrane region" description="Helical; Name=8" evidence="2">
    <location>
        <begin position="495"/>
        <end position="516"/>
    </location>
</feature>
<feature type="binding site" evidence="2">
    <location>
        <begin position="385"/>
        <end position="387"/>
    </location>
    <ligand>
        <name>L-aspartate</name>
        <dbReference type="ChEBI" id="CHEBI:29991"/>
    </ligand>
</feature>
<feature type="binding site" evidence="1">
    <location>
        <position position="416"/>
    </location>
    <ligand>
        <name>Na(+)</name>
        <dbReference type="ChEBI" id="CHEBI:29101"/>
        <label>1</label>
    </ligand>
</feature>
<feature type="binding site" evidence="2">
    <location>
        <position position="418"/>
    </location>
    <ligand>
        <name>Na(+)</name>
        <dbReference type="ChEBI" id="CHEBI:29101"/>
        <label>2</label>
    </ligand>
</feature>
<feature type="binding site" evidence="1">
    <location>
        <position position="420"/>
    </location>
    <ligand>
        <name>Na(+)</name>
        <dbReference type="ChEBI" id="CHEBI:29101"/>
        <label>1</label>
    </ligand>
</feature>
<feature type="binding site" evidence="2">
    <location>
        <position position="424"/>
    </location>
    <ligand>
        <name>L-aspartate</name>
        <dbReference type="ChEBI" id="CHEBI:29991"/>
    </ligand>
</feature>
<feature type="binding site" evidence="2">
    <location>
        <begin position="465"/>
        <end position="469"/>
    </location>
    <ligand>
        <name>L-aspartate</name>
        <dbReference type="ChEBI" id="CHEBI:29991"/>
    </ligand>
</feature>
<feature type="binding site" evidence="2">
    <location>
        <position position="498"/>
    </location>
    <ligand>
        <name>L-aspartate</name>
        <dbReference type="ChEBI" id="CHEBI:29991"/>
    </ligand>
</feature>
<feature type="binding site" evidence="2">
    <location>
        <position position="505"/>
    </location>
    <ligand>
        <name>L-aspartate</name>
        <dbReference type="ChEBI" id="CHEBI:29991"/>
    </ligand>
</feature>
<feature type="binding site" evidence="1">
    <location>
        <position position="505"/>
    </location>
    <ligand>
        <name>Na(+)</name>
        <dbReference type="ChEBI" id="CHEBI:29101"/>
        <label>1</label>
    </ligand>
</feature>
<feature type="binding site" evidence="1">
    <location>
        <position position="509"/>
    </location>
    <ligand>
        <name>Na(+)</name>
        <dbReference type="ChEBI" id="CHEBI:29101"/>
        <label>1</label>
    </ligand>
</feature>
<feature type="modified residue" description="Phosphoserine" evidence="8">
    <location>
        <position position="2"/>
    </location>
</feature>
<feature type="glycosylation site" description="N-linked (GlcNAc...) asparagine" evidence="4">
    <location>
        <position position="213"/>
    </location>
</feature>
<feature type="glycosylation site" description="N-linked (GlcNAc...) asparagine" evidence="4">
    <location>
        <position position="229"/>
    </location>
</feature>
<feature type="glycosylation site" description="N-linked (GlcNAc...) asparagine" evidence="4">
    <location>
        <position position="236"/>
    </location>
</feature>
<feature type="sequence conflict" description="In Ref. 2; AAB40997." evidence="7" ref="2">
    <original>K</original>
    <variation>R</variation>
    <location>
        <position position="119"/>
    </location>
</feature>
<organism>
    <name type="scientific">Rattus norvegicus</name>
    <name type="common">Rat</name>
    <dbReference type="NCBI Taxonomy" id="10116"/>
    <lineage>
        <taxon>Eukaryota</taxon>
        <taxon>Metazoa</taxon>
        <taxon>Chordata</taxon>
        <taxon>Craniata</taxon>
        <taxon>Vertebrata</taxon>
        <taxon>Euteleostomi</taxon>
        <taxon>Mammalia</taxon>
        <taxon>Eutheria</taxon>
        <taxon>Euarchontoglires</taxon>
        <taxon>Glires</taxon>
        <taxon>Rodentia</taxon>
        <taxon>Myomorpha</taxon>
        <taxon>Muroidea</taxon>
        <taxon>Muridae</taxon>
        <taxon>Murinae</taxon>
        <taxon>Rattus</taxon>
    </lineage>
</organism>
<proteinExistence type="evidence at protein level"/>
<accession>O35921</accession>
<accession>P97683</accession>
<sequence>MSSHGNSLFLRESGAGGGCLQGLQDSLQQRALRTRLRLQTMTREHVRRFLRRNAFILLTVSAVIIGVSLAFALRPYQLTYRQIKYFSFPGELLMRMLQMLVLPLIVSSRVTGMASLDNKATGRMGMRAAVYYMVTTVIAVFIGILMVTIIHPGKGSKEGLHREGRIETVPTADAFMDLVRNMFPPNLVEACFKQFKTQYSTRVVTRTIVRTDNGSELGASISPPSSAENETSILENVTRALGTLQEVISFEETVPVPGSANGINALGLVVFSVAFGLVIGGMKHKGRVLRDFFDSLNEAIMRLVGIIIWYAPVGILFLIAGKILEMEDMAVLGGQLGMYTLTVIVGLFLHAGGVLPLIYFLVTHRNPFPFIGGILQALITAMGTSSSSATLPITFRCLEEGLGVDRRITRFVLPVGATVNMDGTALYEALAAIFIAQVNNYELNLGQITTISITATAASVGAAGIPQAGLVTMVIVLTSVGLPTEDITLIIAVDWFLDRLRTMTNVLGDSIGAAVIEHLSQRELELQEAELTLPSLGKPYKSLMAQAKGASRGRGGNESVM</sequence>
<name>EAA4_RAT</name>
<reference key="1">
    <citation type="submission" date="1997-10" db="EMBL/GenBank/DDBJ databases">
        <authorList>
            <person name="Lin C.-L.G."/>
            <person name="Jin L."/>
            <person name="Rothstein J.D."/>
        </authorList>
    </citation>
    <scope>NUCLEOTIDE SEQUENCE [MRNA]</scope>
    <source>
        <tissue>Cerebellum</tissue>
    </source>
</reference>
<reference key="2">
    <citation type="submission" date="1997-01" db="EMBL/GenBank/DDBJ databases">
        <authorList>
            <person name="Matthews J.C."/>
            <person name="Kilberg M.S."/>
            <person name="Novak D.A."/>
        </authorList>
    </citation>
    <scope>NUCLEOTIDE SEQUENCE [MRNA] OF 74-305</scope>
    <source>
        <strain>Sprague-Dawley</strain>
        <tissue>Brain</tissue>
    </source>
</reference>
<reference key="3">
    <citation type="journal article" date="2003" name="J. Biol. Chem.">
        <title>Glutamate modifies ion conduction and voltage-dependent gating of excitatory amino acid transporter-associated anion channels.</title>
        <authorList>
            <person name="Melzer N."/>
            <person name="Biela A."/>
            <person name="Fahlke C."/>
        </authorList>
    </citation>
    <scope>FUNCTION</scope>
    <scope>SUBCELLULAR LOCATION</scope>
</reference>
<reference key="4">
    <citation type="journal article" date="2012" name="Nat. Commun.">
        <title>Quantitative maps of protein phosphorylation sites across 14 different rat organs and tissues.</title>
        <authorList>
            <person name="Lundby A."/>
            <person name="Secher A."/>
            <person name="Lage K."/>
            <person name="Nordsborg N.B."/>
            <person name="Dmytriyev A."/>
            <person name="Lundby C."/>
            <person name="Olsen J.V."/>
        </authorList>
    </citation>
    <scope>PHOSPHORYLATION [LARGE SCALE ANALYSIS] AT SER-2</scope>
    <scope>IDENTIFICATION BY MASS SPECTROMETRY [LARGE SCALE ANALYSIS]</scope>
</reference>
<reference key="5">
    <citation type="journal article" date="2016" name="J. Membr. Biol.">
        <title>Caveolin-1 Sensitivity of Excitatory Amino Acid Transporters EAAT1, EAAT2, EAAT3, and EAAT4.</title>
        <authorList>
            <person name="Abousaab A."/>
            <person name="Warsi J."/>
            <person name="Elvira B."/>
            <person name="Lang F."/>
        </authorList>
    </citation>
    <scope>FUNCTION</scope>
    <scope>SUBCELLULAR LOCATION</scope>
    <scope>BIOPHYSICOCHEMICAL PROPERTIES</scope>
</reference>
<keyword id="KW-0029">Amino-acid transport</keyword>
<keyword id="KW-1003">Cell membrane</keyword>
<keyword id="KW-0868">Chloride</keyword>
<keyword id="KW-0325">Glycoprotein</keyword>
<keyword id="KW-0472">Membrane</keyword>
<keyword id="KW-0479">Metal-binding</keyword>
<keyword id="KW-0597">Phosphoprotein</keyword>
<keyword id="KW-0630">Potassium</keyword>
<keyword id="KW-1185">Reference proteome</keyword>
<keyword id="KW-0915">Sodium</keyword>
<keyword id="KW-0769">Symport</keyword>
<keyword id="KW-0812">Transmembrane</keyword>
<keyword id="KW-1133">Transmembrane helix</keyword>
<keyword id="KW-0813">Transport</keyword>
<evidence type="ECO:0000250" key="1">
    <source>
        <dbReference type="UniProtKB" id="O59010"/>
    </source>
</evidence>
<evidence type="ECO:0000250" key="2">
    <source>
        <dbReference type="UniProtKB" id="P43003"/>
    </source>
</evidence>
<evidence type="ECO:0000250" key="3">
    <source>
        <dbReference type="UniProtKB" id="P48664"/>
    </source>
</evidence>
<evidence type="ECO:0000255" key="4"/>
<evidence type="ECO:0000269" key="5">
    <source>
    </source>
</evidence>
<evidence type="ECO:0000269" key="6">
    <source>
    </source>
</evidence>
<evidence type="ECO:0000305" key="7"/>
<evidence type="ECO:0007744" key="8">
    <source>
    </source>
</evidence>
<dbReference type="EMBL" id="U89608">
    <property type="protein sequence ID" value="AAB72086.1"/>
    <property type="molecule type" value="mRNA"/>
</dbReference>
<dbReference type="EMBL" id="U80915">
    <property type="protein sequence ID" value="AAB40997.1"/>
    <property type="molecule type" value="mRNA"/>
</dbReference>
<dbReference type="RefSeq" id="NP_114454.1">
    <property type="nucleotide sequence ID" value="NM_032065.1"/>
</dbReference>
<dbReference type="SMR" id="O35921"/>
<dbReference type="BioGRID" id="249878">
    <property type="interactions" value="2"/>
</dbReference>
<dbReference type="FunCoup" id="O35921">
    <property type="interactions" value="436"/>
</dbReference>
<dbReference type="IntAct" id="O35921">
    <property type="interactions" value="1"/>
</dbReference>
<dbReference type="MINT" id="O35921"/>
<dbReference type="STRING" id="10116.ENSRNOP00000009931"/>
<dbReference type="BindingDB" id="O35921"/>
<dbReference type="ChEMBL" id="CHEMBL3700"/>
<dbReference type="DrugCentral" id="O35921"/>
<dbReference type="GuidetoPHARMACOLOGY" id="871"/>
<dbReference type="GlyCosmos" id="O35921">
    <property type="glycosylation" value="3 sites, No reported glycans"/>
</dbReference>
<dbReference type="GlyGen" id="O35921">
    <property type="glycosylation" value="3 sites"/>
</dbReference>
<dbReference type="iPTMnet" id="O35921"/>
<dbReference type="PhosphoSitePlus" id="O35921"/>
<dbReference type="PaxDb" id="10116-ENSRNOP00000009931"/>
<dbReference type="GeneID" id="84012"/>
<dbReference type="KEGG" id="rno:84012"/>
<dbReference type="UCSC" id="RGD:620340">
    <property type="organism name" value="rat"/>
</dbReference>
<dbReference type="AGR" id="RGD:620340"/>
<dbReference type="CTD" id="6511"/>
<dbReference type="RGD" id="620340">
    <property type="gene designation" value="Slc1a6"/>
</dbReference>
<dbReference type="eggNOG" id="KOG3787">
    <property type="taxonomic scope" value="Eukaryota"/>
</dbReference>
<dbReference type="InParanoid" id="O35921"/>
<dbReference type="OrthoDB" id="5877963at2759"/>
<dbReference type="PhylomeDB" id="O35921"/>
<dbReference type="Reactome" id="R-RNO-210500">
    <property type="pathway name" value="Glutamate Neurotransmitter Release Cycle"/>
</dbReference>
<dbReference type="Reactome" id="R-RNO-425393">
    <property type="pathway name" value="Transport of inorganic cations/anions and amino acids/oligopeptides"/>
</dbReference>
<dbReference type="PRO" id="PR:O35921"/>
<dbReference type="Proteomes" id="UP000002494">
    <property type="component" value="Unplaced"/>
</dbReference>
<dbReference type="GO" id="GO:0098978">
    <property type="term" value="C:glutamatergic synapse"/>
    <property type="evidence" value="ECO:0000266"/>
    <property type="project" value="RGD"/>
</dbReference>
<dbReference type="GO" id="GO:0005794">
    <property type="term" value="C:Golgi apparatus"/>
    <property type="evidence" value="ECO:0000266"/>
    <property type="project" value="RGD"/>
</dbReference>
<dbReference type="GO" id="GO:0016020">
    <property type="term" value="C:membrane"/>
    <property type="evidence" value="ECO:0000266"/>
    <property type="project" value="RGD"/>
</dbReference>
<dbReference type="GO" id="GO:0098796">
    <property type="term" value="C:membrane protein complex"/>
    <property type="evidence" value="ECO:0000314"/>
    <property type="project" value="ARUK-UCL"/>
</dbReference>
<dbReference type="GO" id="GO:0098688">
    <property type="term" value="C:parallel fiber to Purkinje cell synapse"/>
    <property type="evidence" value="ECO:0000314"/>
    <property type="project" value="SynGO"/>
</dbReference>
<dbReference type="GO" id="GO:0005886">
    <property type="term" value="C:plasma membrane"/>
    <property type="evidence" value="ECO:0000315"/>
    <property type="project" value="UniProtKB"/>
</dbReference>
<dbReference type="GO" id="GO:0045211">
    <property type="term" value="C:postsynaptic membrane"/>
    <property type="evidence" value="ECO:0000314"/>
    <property type="project" value="SynGO"/>
</dbReference>
<dbReference type="GO" id="GO:0042734">
    <property type="term" value="C:presynaptic membrane"/>
    <property type="evidence" value="ECO:0000266"/>
    <property type="project" value="RGD"/>
</dbReference>
<dbReference type="GO" id="GO:0015501">
    <property type="term" value="F:glutamate:sodium symporter activity"/>
    <property type="evidence" value="ECO:0000266"/>
    <property type="project" value="RGD"/>
</dbReference>
<dbReference type="GO" id="GO:0005314">
    <property type="term" value="F:high-affinity L-glutamate transmembrane transporter activity"/>
    <property type="evidence" value="ECO:0000314"/>
    <property type="project" value="UniProtKB"/>
</dbReference>
<dbReference type="GO" id="GO:0015183">
    <property type="term" value="F:L-aspartate transmembrane transporter activity"/>
    <property type="evidence" value="ECO:0000250"/>
    <property type="project" value="UniProtKB"/>
</dbReference>
<dbReference type="GO" id="GO:0005313">
    <property type="term" value="F:L-glutamate transmembrane transporter activity"/>
    <property type="evidence" value="ECO:0000266"/>
    <property type="project" value="RGD"/>
</dbReference>
<dbReference type="GO" id="GO:0046872">
    <property type="term" value="F:metal ion binding"/>
    <property type="evidence" value="ECO:0007669"/>
    <property type="project" value="UniProtKB-KW"/>
</dbReference>
<dbReference type="GO" id="GO:0008509">
    <property type="term" value="F:monoatomic anion transmembrane transporter activity"/>
    <property type="evidence" value="ECO:0000314"/>
    <property type="project" value="RGD"/>
</dbReference>
<dbReference type="GO" id="GO:0015175">
    <property type="term" value="F:neutral L-amino acid transmembrane transporter activity"/>
    <property type="evidence" value="ECO:0000318"/>
    <property type="project" value="GO_Central"/>
</dbReference>
<dbReference type="GO" id="GO:0051649">
    <property type="term" value="P:establishment of localization in cell"/>
    <property type="evidence" value="ECO:0000266"/>
    <property type="project" value="RGD"/>
</dbReference>
<dbReference type="GO" id="GO:0140009">
    <property type="term" value="P:L-aspartate import across plasma membrane"/>
    <property type="evidence" value="ECO:0000250"/>
    <property type="project" value="UniProtKB"/>
</dbReference>
<dbReference type="GO" id="GO:0098712">
    <property type="term" value="P:L-glutamate import across plasma membrane"/>
    <property type="evidence" value="ECO:0000314"/>
    <property type="project" value="UniProtKB"/>
</dbReference>
<dbReference type="GO" id="GO:0015813">
    <property type="term" value="P:L-glutamate transmembrane transport"/>
    <property type="evidence" value="ECO:0000314"/>
    <property type="project" value="UniProtKB"/>
</dbReference>
<dbReference type="GO" id="GO:0001504">
    <property type="term" value="P:neurotransmitter uptake"/>
    <property type="evidence" value="ECO:0000266"/>
    <property type="project" value="RGD"/>
</dbReference>
<dbReference type="GO" id="GO:0042391">
    <property type="term" value="P:regulation of membrane potential"/>
    <property type="evidence" value="ECO:0000266"/>
    <property type="project" value="RGD"/>
</dbReference>
<dbReference type="FunFam" id="1.10.3860.10:FF:000002">
    <property type="entry name" value="Amino acid transporter"/>
    <property type="match status" value="1"/>
</dbReference>
<dbReference type="Gene3D" id="1.10.3860.10">
    <property type="entry name" value="Sodium:dicarboxylate symporter"/>
    <property type="match status" value="1"/>
</dbReference>
<dbReference type="InterPro" id="IPR050746">
    <property type="entry name" value="DAACS"/>
</dbReference>
<dbReference type="InterPro" id="IPR001991">
    <property type="entry name" value="Na-dicarboxylate_symporter"/>
</dbReference>
<dbReference type="InterPro" id="IPR018107">
    <property type="entry name" value="Na-dicarboxylate_symporter_CS"/>
</dbReference>
<dbReference type="InterPro" id="IPR036458">
    <property type="entry name" value="Na:dicarbo_symporter_sf"/>
</dbReference>
<dbReference type="PANTHER" id="PTHR11958:SF67">
    <property type="entry name" value="EXCITATORY AMINO ACID TRANSPORTER 4"/>
    <property type="match status" value="1"/>
</dbReference>
<dbReference type="PANTHER" id="PTHR11958">
    <property type="entry name" value="SODIUM/DICARBOXYLATE SYMPORTER-RELATED"/>
    <property type="match status" value="1"/>
</dbReference>
<dbReference type="Pfam" id="PF00375">
    <property type="entry name" value="SDF"/>
    <property type="match status" value="1"/>
</dbReference>
<dbReference type="PRINTS" id="PR00173">
    <property type="entry name" value="EDTRNSPORT"/>
</dbReference>
<dbReference type="SUPFAM" id="SSF118215">
    <property type="entry name" value="Proton glutamate symport protein"/>
    <property type="match status" value="1"/>
</dbReference>
<dbReference type="PROSITE" id="PS00713">
    <property type="entry name" value="NA_DICARBOXYL_SYMP_1"/>
    <property type="match status" value="1"/>
</dbReference>
<dbReference type="PROSITE" id="PS00714">
    <property type="entry name" value="NA_DICARBOXYL_SYMP_2"/>
    <property type="match status" value="1"/>
</dbReference>